<feature type="chain" id="PRO_0000180007" description="GTPase Era">
    <location>
        <begin position="1"/>
        <end position="296"/>
    </location>
</feature>
<feature type="domain" description="Era-type G" evidence="2">
    <location>
        <begin position="3"/>
        <end position="170"/>
    </location>
</feature>
<feature type="domain" description="KH type-2" evidence="1">
    <location>
        <begin position="201"/>
        <end position="277"/>
    </location>
</feature>
<feature type="region of interest" description="G1" evidence="2">
    <location>
        <begin position="11"/>
        <end position="18"/>
    </location>
</feature>
<feature type="region of interest" description="G2" evidence="2">
    <location>
        <begin position="37"/>
        <end position="41"/>
    </location>
</feature>
<feature type="region of interest" description="G3" evidence="2">
    <location>
        <begin position="58"/>
        <end position="61"/>
    </location>
</feature>
<feature type="region of interest" description="G4" evidence="2">
    <location>
        <begin position="120"/>
        <end position="123"/>
    </location>
</feature>
<feature type="region of interest" description="G5" evidence="2">
    <location>
        <begin position="149"/>
        <end position="151"/>
    </location>
</feature>
<feature type="binding site" evidence="1">
    <location>
        <begin position="11"/>
        <end position="18"/>
    </location>
    <ligand>
        <name>GTP</name>
        <dbReference type="ChEBI" id="CHEBI:37565"/>
    </ligand>
</feature>
<feature type="binding site" evidence="1">
    <location>
        <begin position="58"/>
        <end position="62"/>
    </location>
    <ligand>
        <name>GTP</name>
        <dbReference type="ChEBI" id="CHEBI:37565"/>
    </ligand>
</feature>
<feature type="binding site" evidence="1">
    <location>
        <begin position="120"/>
        <end position="123"/>
    </location>
    <ligand>
        <name>GTP</name>
        <dbReference type="ChEBI" id="CHEBI:37565"/>
    </ligand>
</feature>
<proteinExistence type="inferred from homology"/>
<evidence type="ECO:0000255" key="1">
    <source>
        <dbReference type="HAMAP-Rule" id="MF_00367"/>
    </source>
</evidence>
<evidence type="ECO:0000255" key="2">
    <source>
        <dbReference type="PROSITE-ProRule" id="PRU01050"/>
    </source>
</evidence>
<keyword id="KW-1003">Cell membrane</keyword>
<keyword id="KW-0963">Cytoplasm</keyword>
<keyword id="KW-0342">GTP-binding</keyword>
<keyword id="KW-0472">Membrane</keyword>
<keyword id="KW-0547">Nucleotide-binding</keyword>
<keyword id="KW-1185">Reference proteome</keyword>
<keyword id="KW-0690">Ribosome biogenesis</keyword>
<keyword id="KW-0694">RNA-binding</keyword>
<keyword id="KW-0699">rRNA-binding</keyword>
<sequence length="296" mass="33797">MFKSGFVTIIGRPNVGKSTLLNHIMGEKLSIVSSKPQTTRNNIQTILTGEEYQIVFVDTPGMHNPRHKLGEYMVKVAKESMNEVDVALFVTTPDVEVKRGDLHILEQLKSAKVPVFLVVNKIDETTEERLAATLKNYSEAFEFQEIIPISAQKGKNVDKLIELMVKHLNEGPKYYPDDMIIDKQERFIIAEIIREKALRFLSQEVPHGIAVEILQMKEENEKYKIEATIMCEKDSHKGIIIGKGGEMLKKISQSARKSAEKFLDKRVNMKIWVKVKKDWRDSPFVLGELGYKAPKK</sequence>
<reference key="1">
    <citation type="journal article" date="2001" name="J. Bacteriol.">
        <title>Genome sequence and comparative analysis of the solvent-producing bacterium Clostridium acetobutylicum.</title>
        <authorList>
            <person name="Noelling J."/>
            <person name="Breton G."/>
            <person name="Omelchenko M.V."/>
            <person name="Makarova K.S."/>
            <person name="Zeng Q."/>
            <person name="Gibson R."/>
            <person name="Lee H.M."/>
            <person name="Dubois J."/>
            <person name="Qiu D."/>
            <person name="Hitti J."/>
            <person name="Wolf Y.I."/>
            <person name="Tatusov R.L."/>
            <person name="Sabathe F."/>
            <person name="Doucette-Stamm L.A."/>
            <person name="Soucaille P."/>
            <person name="Daly M.J."/>
            <person name="Bennett G.N."/>
            <person name="Koonin E.V."/>
            <person name="Smith D.R."/>
        </authorList>
    </citation>
    <scope>NUCLEOTIDE SEQUENCE [LARGE SCALE GENOMIC DNA]</scope>
    <source>
        <strain>ATCC 824 / DSM 792 / JCM 1419 / IAM 19013 / LMG 5710 / NBRC 13948 / NRRL B-527 / VKM B-1787 / 2291 / W</strain>
    </source>
</reference>
<name>ERA_CLOAB</name>
<accession>Q97JI5</accession>
<gene>
    <name evidence="1" type="primary">era</name>
    <name type="ordered locus">CA_C1295</name>
</gene>
<dbReference type="EMBL" id="AE001437">
    <property type="protein sequence ID" value="AAK79266.1"/>
    <property type="molecule type" value="Genomic_DNA"/>
</dbReference>
<dbReference type="PIR" id="G97059">
    <property type="entry name" value="G97059"/>
</dbReference>
<dbReference type="RefSeq" id="NP_347926.1">
    <property type="nucleotide sequence ID" value="NC_003030.1"/>
</dbReference>
<dbReference type="RefSeq" id="WP_010964607.1">
    <property type="nucleotide sequence ID" value="NC_003030.1"/>
</dbReference>
<dbReference type="SMR" id="Q97JI5"/>
<dbReference type="STRING" id="272562.CA_C1295"/>
<dbReference type="GeneID" id="44997801"/>
<dbReference type="KEGG" id="cac:CA_C1295"/>
<dbReference type="PATRIC" id="fig|272562.8.peg.1496"/>
<dbReference type="eggNOG" id="COG1159">
    <property type="taxonomic scope" value="Bacteria"/>
</dbReference>
<dbReference type="HOGENOM" id="CLU_038009_1_0_9"/>
<dbReference type="OrthoDB" id="9805918at2"/>
<dbReference type="Proteomes" id="UP000000814">
    <property type="component" value="Chromosome"/>
</dbReference>
<dbReference type="GO" id="GO:0005829">
    <property type="term" value="C:cytosol"/>
    <property type="evidence" value="ECO:0007669"/>
    <property type="project" value="TreeGrafter"/>
</dbReference>
<dbReference type="GO" id="GO:0005886">
    <property type="term" value="C:plasma membrane"/>
    <property type="evidence" value="ECO:0007669"/>
    <property type="project" value="UniProtKB-SubCell"/>
</dbReference>
<dbReference type="GO" id="GO:0005525">
    <property type="term" value="F:GTP binding"/>
    <property type="evidence" value="ECO:0007669"/>
    <property type="project" value="UniProtKB-UniRule"/>
</dbReference>
<dbReference type="GO" id="GO:0003924">
    <property type="term" value="F:GTPase activity"/>
    <property type="evidence" value="ECO:0007669"/>
    <property type="project" value="UniProtKB-UniRule"/>
</dbReference>
<dbReference type="GO" id="GO:0043024">
    <property type="term" value="F:ribosomal small subunit binding"/>
    <property type="evidence" value="ECO:0007669"/>
    <property type="project" value="TreeGrafter"/>
</dbReference>
<dbReference type="GO" id="GO:0070181">
    <property type="term" value="F:small ribosomal subunit rRNA binding"/>
    <property type="evidence" value="ECO:0007669"/>
    <property type="project" value="UniProtKB-UniRule"/>
</dbReference>
<dbReference type="GO" id="GO:0000028">
    <property type="term" value="P:ribosomal small subunit assembly"/>
    <property type="evidence" value="ECO:0007669"/>
    <property type="project" value="TreeGrafter"/>
</dbReference>
<dbReference type="CDD" id="cd04163">
    <property type="entry name" value="Era"/>
    <property type="match status" value="1"/>
</dbReference>
<dbReference type="CDD" id="cd22534">
    <property type="entry name" value="KH-II_Era"/>
    <property type="match status" value="1"/>
</dbReference>
<dbReference type="FunFam" id="3.30.300.20:FF:000003">
    <property type="entry name" value="GTPase Era"/>
    <property type="match status" value="1"/>
</dbReference>
<dbReference type="FunFam" id="3.40.50.300:FF:000094">
    <property type="entry name" value="GTPase Era"/>
    <property type="match status" value="1"/>
</dbReference>
<dbReference type="Gene3D" id="3.30.300.20">
    <property type="match status" value="1"/>
</dbReference>
<dbReference type="Gene3D" id="3.40.50.300">
    <property type="entry name" value="P-loop containing nucleotide triphosphate hydrolases"/>
    <property type="match status" value="1"/>
</dbReference>
<dbReference type="HAMAP" id="MF_00367">
    <property type="entry name" value="GTPase_Era"/>
    <property type="match status" value="1"/>
</dbReference>
<dbReference type="InterPro" id="IPR030388">
    <property type="entry name" value="G_ERA_dom"/>
</dbReference>
<dbReference type="InterPro" id="IPR006073">
    <property type="entry name" value="GTP-bd"/>
</dbReference>
<dbReference type="InterPro" id="IPR005662">
    <property type="entry name" value="GTPase_Era-like"/>
</dbReference>
<dbReference type="InterPro" id="IPR015946">
    <property type="entry name" value="KH_dom-like_a/b"/>
</dbReference>
<dbReference type="InterPro" id="IPR004044">
    <property type="entry name" value="KH_dom_type_2"/>
</dbReference>
<dbReference type="InterPro" id="IPR009019">
    <property type="entry name" value="KH_sf_prok-type"/>
</dbReference>
<dbReference type="InterPro" id="IPR027417">
    <property type="entry name" value="P-loop_NTPase"/>
</dbReference>
<dbReference type="InterPro" id="IPR005225">
    <property type="entry name" value="Small_GTP-bd"/>
</dbReference>
<dbReference type="NCBIfam" id="TIGR00436">
    <property type="entry name" value="era"/>
    <property type="match status" value="1"/>
</dbReference>
<dbReference type="NCBIfam" id="NF000908">
    <property type="entry name" value="PRK00089.1"/>
    <property type="match status" value="1"/>
</dbReference>
<dbReference type="NCBIfam" id="TIGR00231">
    <property type="entry name" value="small_GTP"/>
    <property type="match status" value="1"/>
</dbReference>
<dbReference type="PANTHER" id="PTHR42698">
    <property type="entry name" value="GTPASE ERA"/>
    <property type="match status" value="1"/>
</dbReference>
<dbReference type="PANTHER" id="PTHR42698:SF1">
    <property type="entry name" value="GTPASE ERA, MITOCHONDRIAL"/>
    <property type="match status" value="1"/>
</dbReference>
<dbReference type="Pfam" id="PF07650">
    <property type="entry name" value="KH_2"/>
    <property type="match status" value="1"/>
</dbReference>
<dbReference type="Pfam" id="PF01926">
    <property type="entry name" value="MMR_HSR1"/>
    <property type="match status" value="1"/>
</dbReference>
<dbReference type="SUPFAM" id="SSF52540">
    <property type="entry name" value="P-loop containing nucleoside triphosphate hydrolases"/>
    <property type="match status" value="1"/>
</dbReference>
<dbReference type="SUPFAM" id="SSF54814">
    <property type="entry name" value="Prokaryotic type KH domain (KH-domain type II)"/>
    <property type="match status" value="1"/>
</dbReference>
<dbReference type="PROSITE" id="PS51713">
    <property type="entry name" value="G_ERA"/>
    <property type="match status" value="1"/>
</dbReference>
<dbReference type="PROSITE" id="PS50823">
    <property type="entry name" value="KH_TYPE_2"/>
    <property type="match status" value="1"/>
</dbReference>
<comment type="function">
    <text evidence="1">An essential GTPase that binds both GDP and GTP, with rapid nucleotide exchange. Plays a role in 16S rRNA processing and 30S ribosomal subunit biogenesis and possibly also in cell cycle regulation and energy metabolism.</text>
</comment>
<comment type="subunit">
    <text evidence="1">Monomer.</text>
</comment>
<comment type="subcellular location">
    <subcellularLocation>
        <location>Cytoplasm</location>
    </subcellularLocation>
    <subcellularLocation>
        <location evidence="1">Cell membrane</location>
        <topology evidence="1">Peripheral membrane protein</topology>
    </subcellularLocation>
</comment>
<comment type="similarity">
    <text evidence="1 2">Belongs to the TRAFAC class TrmE-Era-EngA-EngB-Septin-like GTPase superfamily. Era GTPase family.</text>
</comment>
<organism>
    <name type="scientific">Clostridium acetobutylicum (strain ATCC 824 / DSM 792 / JCM 1419 / IAM 19013 / LMG 5710 / NBRC 13948 / NRRL B-527 / VKM B-1787 / 2291 / W)</name>
    <dbReference type="NCBI Taxonomy" id="272562"/>
    <lineage>
        <taxon>Bacteria</taxon>
        <taxon>Bacillati</taxon>
        <taxon>Bacillota</taxon>
        <taxon>Clostridia</taxon>
        <taxon>Eubacteriales</taxon>
        <taxon>Clostridiaceae</taxon>
        <taxon>Clostridium</taxon>
    </lineage>
</organism>
<protein>
    <recommendedName>
        <fullName evidence="1">GTPase Era</fullName>
    </recommendedName>
</protein>